<protein>
    <recommendedName>
        <fullName evidence="1">DNA-directed RNA polymerase subunit omega</fullName>
        <shortName evidence="1">RNAP omega subunit</shortName>
        <ecNumber evidence="1">2.7.7.6</ecNumber>
    </recommendedName>
    <alternativeName>
        <fullName evidence="1">RNA polymerase omega subunit</fullName>
    </alternativeName>
    <alternativeName>
        <fullName evidence="1">Transcriptase subunit omega</fullName>
    </alternativeName>
</protein>
<evidence type="ECO:0000255" key="1">
    <source>
        <dbReference type="HAMAP-Rule" id="MF_00366"/>
    </source>
</evidence>
<proteinExistence type="inferred from homology"/>
<accession>Q4UY42</accession>
<reference key="1">
    <citation type="journal article" date="2005" name="Genome Res.">
        <title>Comparative and functional genomic analyses of the pathogenicity of phytopathogen Xanthomonas campestris pv. campestris.</title>
        <authorList>
            <person name="Qian W."/>
            <person name="Jia Y."/>
            <person name="Ren S.-X."/>
            <person name="He Y.-Q."/>
            <person name="Feng J.-X."/>
            <person name="Lu L.-F."/>
            <person name="Sun Q."/>
            <person name="Ying G."/>
            <person name="Tang D.-J."/>
            <person name="Tang H."/>
            <person name="Wu W."/>
            <person name="Hao P."/>
            <person name="Wang L."/>
            <person name="Jiang B.-L."/>
            <person name="Zeng S."/>
            <person name="Gu W.-Y."/>
            <person name="Lu G."/>
            <person name="Rong L."/>
            <person name="Tian Y."/>
            <person name="Yao Z."/>
            <person name="Fu G."/>
            <person name="Chen B."/>
            <person name="Fang R."/>
            <person name="Qiang B."/>
            <person name="Chen Z."/>
            <person name="Zhao G.-P."/>
            <person name="Tang J.-L."/>
            <person name="He C."/>
        </authorList>
    </citation>
    <scope>NUCLEOTIDE SEQUENCE [LARGE SCALE GENOMIC DNA]</scope>
    <source>
        <strain>8004</strain>
    </source>
</reference>
<feature type="chain" id="PRO_0000237530" description="DNA-directed RNA polymerase subunit omega">
    <location>
        <begin position="1"/>
        <end position="99"/>
    </location>
</feature>
<dbReference type="EC" id="2.7.7.6" evidence="1"/>
<dbReference type="EMBL" id="CP000050">
    <property type="protein sequence ID" value="AAY48031.1"/>
    <property type="molecule type" value="Genomic_DNA"/>
</dbReference>
<dbReference type="RefSeq" id="WP_002812428.1">
    <property type="nucleotide sequence ID" value="NZ_CP155948.1"/>
</dbReference>
<dbReference type="SMR" id="Q4UY42"/>
<dbReference type="GeneID" id="97511588"/>
<dbReference type="KEGG" id="xcb:XC_0957"/>
<dbReference type="HOGENOM" id="CLU_125406_5_3_6"/>
<dbReference type="Proteomes" id="UP000000420">
    <property type="component" value="Chromosome"/>
</dbReference>
<dbReference type="GO" id="GO:0000428">
    <property type="term" value="C:DNA-directed RNA polymerase complex"/>
    <property type="evidence" value="ECO:0007669"/>
    <property type="project" value="UniProtKB-KW"/>
</dbReference>
<dbReference type="GO" id="GO:0003677">
    <property type="term" value="F:DNA binding"/>
    <property type="evidence" value="ECO:0007669"/>
    <property type="project" value="UniProtKB-UniRule"/>
</dbReference>
<dbReference type="GO" id="GO:0003899">
    <property type="term" value="F:DNA-directed RNA polymerase activity"/>
    <property type="evidence" value="ECO:0007669"/>
    <property type="project" value="UniProtKB-UniRule"/>
</dbReference>
<dbReference type="GO" id="GO:0006351">
    <property type="term" value="P:DNA-templated transcription"/>
    <property type="evidence" value="ECO:0007669"/>
    <property type="project" value="UniProtKB-UniRule"/>
</dbReference>
<dbReference type="Gene3D" id="3.90.940.10">
    <property type="match status" value="1"/>
</dbReference>
<dbReference type="HAMAP" id="MF_00366">
    <property type="entry name" value="RNApol_bact_RpoZ"/>
    <property type="match status" value="1"/>
</dbReference>
<dbReference type="InterPro" id="IPR003716">
    <property type="entry name" value="DNA-dir_RNA_pol_omega"/>
</dbReference>
<dbReference type="InterPro" id="IPR006110">
    <property type="entry name" value="Pol_omega/Rpo6/RPB6"/>
</dbReference>
<dbReference type="InterPro" id="IPR036161">
    <property type="entry name" value="RPB6/omega-like_sf"/>
</dbReference>
<dbReference type="NCBIfam" id="TIGR00690">
    <property type="entry name" value="rpoZ"/>
    <property type="match status" value="1"/>
</dbReference>
<dbReference type="PANTHER" id="PTHR34476">
    <property type="entry name" value="DNA-DIRECTED RNA POLYMERASE SUBUNIT OMEGA"/>
    <property type="match status" value="1"/>
</dbReference>
<dbReference type="PANTHER" id="PTHR34476:SF1">
    <property type="entry name" value="DNA-DIRECTED RNA POLYMERASE SUBUNIT OMEGA"/>
    <property type="match status" value="1"/>
</dbReference>
<dbReference type="Pfam" id="PF01192">
    <property type="entry name" value="RNA_pol_Rpb6"/>
    <property type="match status" value="1"/>
</dbReference>
<dbReference type="SMART" id="SM01409">
    <property type="entry name" value="RNA_pol_Rpb6"/>
    <property type="match status" value="1"/>
</dbReference>
<dbReference type="SUPFAM" id="SSF63562">
    <property type="entry name" value="RPB6/omega subunit-like"/>
    <property type="match status" value="1"/>
</dbReference>
<comment type="function">
    <text evidence="1">Promotes RNA polymerase assembly. Latches the N- and C-terminal regions of the beta' subunit thereby facilitating its interaction with the beta and alpha subunits.</text>
</comment>
<comment type="catalytic activity">
    <reaction evidence="1">
        <text>RNA(n) + a ribonucleoside 5'-triphosphate = RNA(n+1) + diphosphate</text>
        <dbReference type="Rhea" id="RHEA:21248"/>
        <dbReference type="Rhea" id="RHEA-COMP:14527"/>
        <dbReference type="Rhea" id="RHEA-COMP:17342"/>
        <dbReference type="ChEBI" id="CHEBI:33019"/>
        <dbReference type="ChEBI" id="CHEBI:61557"/>
        <dbReference type="ChEBI" id="CHEBI:140395"/>
        <dbReference type="EC" id="2.7.7.6"/>
    </reaction>
</comment>
<comment type="subunit">
    <text evidence="1">The RNAP catalytic core consists of 2 alpha, 1 beta, 1 beta' and 1 omega subunit. When a sigma factor is associated with the core the holoenzyme is formed, which can initiate transcription.</text>
</comment>
<comment type="similarity">
    <text evidence="1">Belongs to the RNA polymerase subunit omega family.</text>
</comment>
<organism>
    <name type="scientific">Xanthomonas campestris pv. campestris (strain 8004)</name>
    <dbReference type="NCBI Taxonomy" id="314565"/>
    <lineage>
        <taxon>Bacteria</taxon>
        <taxon>Pseudomonadati</taxon>
        <taxon>Pseudomonadota</taxon>
        <taxon>Gammaproteobacteria</taxon>
        <taxon>Lysobacterales</taxon>
        <taxon>Lysobacteraceae</taxon>
        <taxon>Xanthomonas</taxon>
    </lineage>
</organism>
<gene>
    <name evidence="1" type="primary">rpoZ</name>
    <name type="ordered locus">XC_0957</name>
</gene>
<keyword id="KW-0240">DNA-directed RNA polymerase</keyword>
<keyword id="KW-0548">Nucleotidyltransferase</keyword>
<keyword id="KW-0804">Transcription</keyword>
<keyword id="KW-0808">Transferase</keyword>
<name>RPOZ_XANC8</name>
<sequence>MARITVEDCLEVVNNRFELVMMASKRARQLANGVQPLIENADASDKPTVMALREIAARRIDNALIDEVEKAERERAEREALEWAAAEVVADEDMSKNDD</sequence>